<reference key="1">
    <citation type="journal article" date="2000" name="Nature">
        <title>Complete genome sequence of Pseudomonas aeruginosa PAO1, an opportunistic pathogen.</title>
        <authorList>
            <person name="Stover C.K."/>
            <person name="Pham X.-Q.T."/>
            <person name="Erwin A.L."/>
            <person name="Mizoguchi S.D."/>
            <person name="Warrener P."/>
            <person name="Hickey M.J."/>
            <person name="Brinkman F.S.L."/>
            <person name="Hufnagle W.O."/>
            <person name="Kowalik D.J."/>
            <person name="Lagrou M."/>
            <person name="Garber R.L."/>
            <person name="Goltry L."/>
            <person name="Tolentino E."/>
            <person name="Westbrock-Wadman S."/>
            <person name="Yuan Y."/>
            <person name="Brody L.L."/>
            <person name="Coulter S.N."/>
            <person name="Folger K.R."/>
            <person name="Kas A."/>
            <person name="Larbig K."/>
            <person name="Lim R.M."/>
            <person name="Smith K.A."/>
            <person name="Spencer D.H."/>
            <person name="Wong G.K.-S."/>
            <person name="Wu Z."/>
            <person name="Paulsen I.T."/>
            <person name="Reizer J."/>
            <person name="Saier M.H. Jr."/>
            <person name="Hancock R.E.W."/>
            <person name="Lory S."/>
            <person name="Olson M.V."/>
        </authorList>
    </citation>
    <scope>NUCLEOTIDE SEQUENCE [LARGE SCALE GENOMIC DNA]</scope>
    <source>
        <strain>ATCC 15692 / DSM 22644 / CIP 104116 / JCM 14847 / LMG 12228 / 1C / PRS 101 / PAO1</strain>
    </source>
</reference>
<reference key="2">
    <citation type="journal article" date="1990" name="Proc. Natl. Acad. Sci. U.S.A.">
        <title>Pseudomonas chromosomal replication origins: a bacterial class distinct from Escherichia coli-type origins.</title>
        <authorList>
            <person name="Yee T.W."/>
            <person name="Smith D.W."/>
        </authorList>
    </citation>
    <scope>NUCLEOTIDE SEQUENCE [GENOMIC DNA] OF 1-36</scope>
</reference>
<keyword id="KW-0002">3D-structure</keyword>
<keyword id="KW-1185">Reference proteome</keyword>
<keyword id="KW-0687">Ribonucleoprotein</keyword>
<keyword id="KW-0689">Ribosomal protein</keyword>
<sequence>MKRTFQPSTLKRARVHGFRARMATKNGRQVLSRRRAKGRKRLTV</sequence>
<comment type="similarity">
    <text evidence="2">Belongs to the bacterial ribosomal protein bL34 family.</text>
</comment>
<proteinExistence type="evidence at protein level"/>
<dbReference type="EMBL" id="AE004091">
    <property type="protein sequence ID" value="AAG08955.1"/>
    <property type="molecule type" value="Genomic_DNA"/>
</dbReference>
<dbReference type="EMBL" id="M30125">
    <property type="protein sequence ID" value="AAA25915.2"/>
    <property type="molecule type" value="Genomic_DNA"/>
</dbReference>
<dbReference type="PIR" id="A34835">
    <property type="entry name" value="A34835"/>
</dbReference>
<dbReference type="PIR" id="A82951">
    <property type="entry name" value="A82951"/>
</dbReference>
<dbReference type="RefSeq" id="NP_254257.1">
    <property type="nucleotide sequence ID" value="NC_002516.2"/>
</dbReference>
<dbReference type="RefSeq" id="WP_003100258.1">
    <property type="nucleotide sequence ID" value="NZ_QZGE01000012.1"/>
</dbReference>
<dbReference type="PDB" id="7UNR">
    <property type="method" value="EM"/>
    <property type="resolution" value="2.90 A"/>
    <property type="chains" value="6=1-44"/>
</dbReference>
<dbReference type="PDB" id="7UNU">
    <property type="method" value="EM"/>
    <property type="resolution" value="2.90 A"/>
    <property type="chains" value="6=1-44"/>
</dbReference>
<dbReference type="PDB" id="7UNV">
    <property type="method" value="EM"/>
    <property type="resolution" value="2.70 A"/>
    <property type="chains" value="6=1-44"/>
</dbReference>
<dbReference type="PDB" id="7UNW">
    <property type="method" value="EM"/>
    <property type="resolution" value="2.60 A"/>
    <property type="chains" value="6=1-44"/>
</dbReference>
<dbReference type="PDB" id="8CD1">
    <property type="method" value="EM"/>
    <property type="resolution" value="3.00 A"/>
    <property type="chains" value="4=1-44"/>
</dbReference>
<dbReference type="PDB" id="8RWG">
    <property type="method" value="EM"/>
    <property type="resolution" value="2.46 A"/>
    <property type="chains" value="7=1-44"/>
</dbReference>
<dbReference type="PDBsum" id="7UNR"/>
<dbReference type="PDBsum" id="7UNU"/>
<dbReference type="PDBsum" id="7UNV"/>
<dbReference type="PDBsum" id="7UNW"/>
<dbReference type="PDBsum" id="8CD1"/>
<dbReference type="PDBsum" id="8RWG"/>
<dbReference type="EMDB" id="EMD-16566"/>
<dbReference type="EMDB" id="EMD-19547"/>
<dbReference type="EMDB" id="EMD-26630"/>
<dbReference type="EMDB" id="EMD-26633"/>
<dbReference type="EMDB" id="EMD-26634"/>
<dbReference type="EMDB" id="EMD-26635"/>
<dbReference type="SMR" id="P29436"/>
<dbReference type="FunCoup" id="P29436">
    <property type="interactions" value="463"/>
</dbReference>
<dbReference type="STRING" id="208964.PA5570"/>
<dbReference type="PaxDb" id="208964-PA5570"/>
<dbReference type="DNASU" id="877911"/>
<dbReference type="GeneID" id="79911171"/>
<dbReference type="GeneID" id="877911"/>
<dbReference type="KEGG" id="pae:PA5570"/>
<dbReference type="PATRIC" id="fig|208964.12.peg.5836"/>
<dbReference type="PseudoCAP" id="PA5570"/>
<dbReference type="HOGENOM" id="CLU_129938_2_0_6"/>
<dbReference type="InParanoid" id="P29436"/>
<dbReference type="OrthoDB" id="9804164at2"/>
<dbReference type="PhylomeDB" id="P29436"/>
<dbReference type="BioCyc" id="PAER208964:G1FZ6-5697-MONOMER"/>
<dbReference type="PRO" id="PR:P29436"/>
<dbReference type="Proteomes" id="UP000002438">
    <property type="component" value="Chromosome"/>
</dbReference>
<dbReference type="GO" id="GO:1990904">
    <property type="term" value="C:ribonucleoprotein complex"/>
    <property type="evidence" value="ECO:0007669"/>
    <property type="project" value="UniProtKB-KW"/>
</dbReference>
<dbReference type="GO" id="GO:0005840">
    <property type="term" value="C:ribosome"/>
    <property type="evidence" value="ECO:0007669"/>
    <property type="project" value="UniProtKB-KW"/>
</dbReference>
<dbReference type="GO" id="GO:0003735">
    <property type="term" value="F:structural constituent of ribosome"/>
    <property type="evidence" value="ECO:0007669"/>
    <property type="project" value="InterPro"/>
</dbReference>
<dbReference type="GO" id="GO:0006412">
    <property type="term" value="P:translation"/>
    <property type="evidence" value="ECO:0007669"/>
    <property type="project" value="UniProtKB-UniRule"/>
</dbReference>
<dbReference type="FunFam" id="1.10.287.3980:FF:000001">
    <property type="entry name" value="Mitochondrial ribosomal protein L34"/>
    <property type="match status" value="1"/>
</dbReference>
<dbReference type="Gene3D" id="1.10.287.3980">
    <property type="match status" value="1"/>
</dbReference>
<dbReference type="HAMAP" id="MF_00391">
    <property type="entry name" value="Ribosomal_bL34"/>
    <property type="match status" value="1"/>
</dbReference>
<dbReference type="InterPro" id="IPR000271">
    <property type="entry name" value="Ribosomal_bL34"/>
</dbReference>
<dbReference type="InterPro" id="IPR020939">
    <property type="entry name" value="Ribosomal_bL34_CS"/>
</dbReference>
<dbReference type="NCBIfam" id="TIGR01030">
    <property type="entry name" value="rpmH_bact"/>
    <property type="match status" value="1"/>
</dbReference>
<dbReference type="PANTHER" id="PTHR14503:SF4">
    <property type="entry name" value="LARGE RIBOSOMAL SUBUNIT PROTEIN BL34M"/>
    <property type="match status" value="1"/>
</dbReference>
<dbReference type="PANTHER" id="PTHR14503">
    <property type="entry name" value="MITOCHONDRIAL RIBOSOMAL PROTEIN 34 FAMILY MEMBER"/>
    <property type="match status" value="1"/>
</dbReference>
<dbReference type="Pfam" id="PF00468">
    <property type="entry name" value="Ribosomal_L34"/>
    <property type="match status" value="1"/>
</dbReference>
<dbReference type="PROSITE" id="PS00784">
    <property type="entry name" value="RIBOSOMAL_L34"/>
    <property type="match status" value="1"/>
</dbReference>
<feature type="chain" id="PRO_0000187441" description="Large ribosomal subunit protein bL34">
    <location>
        <begin position="1"/>
        <end position="44"/>
    </location>
</feature>
<feature type="region of interest" description="Disordered" evidence="1">
    <location>
        <begin position="24"/>
        <end position="44"/>
    </location>
</feature>
<feature type="compositionally biased region" description="Basic residues" evidence="1">
    <location>
        <begin position="31"/>
        <end position="44"/>
    </location>
</feature>
<gene>
    <name type="primary">rpmH</name>
    <name type="ordered locus">PA5570</name>
</gene>
<evidence type="ECO:0000256" key="1">
    <source>
        <dbReference type="SAM" id="MobiDB-lite"/>
    </source>
</evidence>
<evidence type="ECO:0000305" key="2"/>
<organism>
    <name type="scientific">Pseudomonas aeruginosa (strain ATCC 15692 / DSM 22644 / CIP 104116 / JCM 14847 / LMG 12228 / 1C / PRS 101 / PAO1)</name>
    <dbReference type="NCBI Taxonomy" id="208964"/>
    <lineage>
        <taxon>Bacteria</taxon>
        <taxon>Pseudomonadati</taxon>
        <taxon>Pseudomonadota</taxon>
        <taxon>Gammaproteobacteria</taxon>
        <taxon>Pseudomonadales</taxon>
        <taxon>Pseudomonadaceae</taxon>
        <taxon>Pseudomonas</taxon>
    </lineage>
</organism>
<protein>
    <recommendedName>
        <fullName evidence="2">Large ribosomal subunit protein bL34</fullName>
    </recommendedName>
    <alternativeName>
        <fullName>50S ribosomal protein L34</fullName>
    </alternativeName>
</protein>
<accession>P29436</accession>
<name>RL34_PSEAE</name>